<sequence>MLPREIEELLNIILQHNTWRRKETINLIASENVMSPLAELVYVNDFAGRYAEGTVGNRYYQGTKYVDILEDSLSKRFAKVLDAKFVDVRPISGTIANLATYHALVPEGGIVASLPVKYGGHISHNTVGGLKALRVKTVELPWDFENFNIDIDAARKIIEEKRPNLIILGASLYLFPHPVREIANAAKAVGAYVLHDSAHVFGLIIGGVFPNPLKEGAHVITSSTHKTFPGPQGGLIASVTDEELNNAIQRAVFPVFTSNYHLHRYAATYVTLIEMEHFGAEYGARIVENAKALAEALAEEGVTPVGERLGYTKTHQVAVDVSKFGGGDKVARLLEEANIIVNKNALPWDKSVLKPSGIRMGVQEMTRFGMGKGEMKEIAKFIARVLKGEDPTAVKREVVEFRKTFIEIKYGFKIDKEIIDKIFYSLNLYT</sequence>
<feature type="chain" id="PRO_0000113720" description="Serine hydroxymethyltransferase">
    <location>
        <begin position="1"/>
        <end position="430"/>
    </location>
</feature>
<feature type="binding site" evidence="1">
    <location>
        <begin position="120"/>
        <end position="122"/>
    </location>
    <ligand>
        <name>(6S)-5,6,7,8-tetrahydrofolate</name>
        <dbReference type="ChEBI" id="CHEBI:57453"/>
    </ligand>
</feature>
<feature type="site" description="Plays an important role in substrate specificity" evidence="1">
    <location>
        <position position="225"/>
    </location>
</feature>
<feature type="modified residue" description="N6-(pyridoxal phosphate)lysine" evidence="1">
    <location>
        <position position="226"/>
    </location>
</feature>
<accession>Q8ZYF9</accession>
<keyword id="KW-0028">Amino-acid biosynthesis</keyword>
<keyword id="KW-0963">Cytoplasm</keyword>
<keyword id="KW-0554">One-carbon metabolism</keyword>
<keyword id="KW-0663">Pyridoxal phosphate</keyword>
<keyword id="KW-1185">Reference proteome</keyword>
<keyword id="KW-0808">Transferase</keyword>
<comment type="function">
    <text evidence="1">Catalyzes the reversible interconversion of serine and glycine with a modified folate serving as the one-carbon carrier. Also exhibits a pteridine-independent aldolase activity toward beta-hydroxyamino acids, producing glycine and aldehydes, via a retro-aldol mechanism.</text>
</comment>
<comment type="cofactor">
    <cofactor evidence="1">
        <name>pyridoxal 5'-phosphate</name>
        <dbReference type="ChEBI" id="CHEBI:597326"/>
    </cofactor>
</comment>
<comment type="pathway">
    <text evidence="1">Amino-acid biosynthesis; glycine biosynthesis; glycine from L-serine: step 1/1.</text>
</comment>
<comment type="subunit">
    <text evidence="1">Homodimer.</text>
</comment>
<comment type="subcellular location">
    <subcellularLocation>
        <location evidence="1">Cytoplasm</location>
    </subcellularLocation>
</comment>
<comment type="similarity">
    <text evidence="1">Belongs to the SHMT family.</text>
</comment>
<protein>
    <recommendedName>
        <fullName evidence="1">Serine hydroxymethyltransferase</fullName>
        <shortName evidence="1">SHMT</shortName>
        <shortName evidence="1">Serine methylase</shortName>
        <ecNumber evidence="1">2.1.2.-</ecNumber>
    </recommendedName>
</protein>
<name>GLYA_PYRAE</name>
<dbReference type="EC" id="2.1.2.-" evidence="1"/>
<dbReference type="EMBL" id="AE009441">
    <property type="protein sequence ID" value="AAL63034.1"/>
    <property type="molecule type" value="Genomic_DNA"/>
</dbReference>
<dbReference type="RefSeq" id="WP_011007506.1">
    <property type="nucleotide sequence ID" value="NC_003364.1"/>
</dbReference>
<dbReference type="SMR" id="Q8ZYF9"/>
<dbReference type="FunCoup" id="Q8ZYF9">
    <property type="interactions" value="327"/>
</dbReference>
<dbReference type="STRING" id="178306.PAE0798"/>
<dbReference type="EnsemblBacteria" id="AAL63034">
    <property type="protein sequence ID" value="AAL63034"/>
    <property type="gene ID" value="PAE0798"/>
</dbReference>
<dbReference type="GeneID" id="1465262"/>
<dbReference type="KEGG" id="pai:PAE0798"/>
<dbReference type="PATRIC" id="fig|178306.9.peg.583"/>
<dbReference type="eggNOG" id="arCOG00070">
    <property type="taxonomic scope" value="Archaea"/>
</dbReference>
<dbReference type="HOGENOM" id="CLU_022477_2_1_2"/>
<dbReference type="InParanoid" id="Q8ZYF9"/>
<dbReference type="UniPathway" id="UPA00288">
    <property type="reaction ID" value="UER01023"/>
</dbReference>
<dbReference type="Proteomes" id="UP000002439">
    <property type="component" value="Chromosome"/>
</dbReference>
<dbReference type="GO" id="GO:0005737">
    <property type="term" value="C:cytoplasm"/>
    <property type="evidence" value="ECO:0000318"/>
    <property type="project" value="GO_Central"/>
</dbReference>
<dbReference type="GO" id="GO:0004372">
    <property type="term" value="F:glycine hydroxymethyltransferase activity"/>
    <property type="evidence" value="ECO:0000318"/>
    <property type="project" value="GO_Central"/>
</dbReference>
<dbReference type="GO" id="GO:0030170">
    <property type="term" value="F:pyridoxal phosphate binding"/>
    <property type="evidence" value="ECO:0000318"/>
    <property type="project" value="GO_Central"/>
</dbReference>
<dbReference type="GO" id="GO:0019264">
    <property type="term" value="P:glycine biosynthetic process from serine"/>
    <property type="evidence" value="ECO:0000318"/>
    <property type="project" value="GO_Central"/>
</dbReference>
<dbReference type="GO" id="GO:0035999">
    <property type="term" value="P:tetrahydrofolate interconversion"/>
    <property type="evidence" value="ECO:0007669"/>
    <property type="project" value="InterPro"/>
</dbReference>
<dbReference type="GO" id="GO:0046653">
    <property type="term" value="P:tetrahydrofolate metabolic process"/>
    <property type="evidence" value="ECO:0000318"/>
    <property type="project" value="GO_Central"/>
</dbReference>
<dbReference type="CDD" id="cd00378">
    <property type="entry name" value="SHMT"/>
    <property type="match status" value="1"/>
</dbReference>
<dbReference type="FunFam" id="3.40.640.10:FF:000101">
    <property type="entry name" value="Serine hydroxymethyltransferase"/>
    <property type="match status" value="1"/>
</dbReference>
<dbReference type="FunFam" id="3.90.1150.10:FF:000114">
    <property type="entry name" value="Serine hydroxymethyltransferase"/>
    <property type="match status" value="1"/>
</dbReference>
<dbReference type="Gene3D" id="3.90.1150.10">
    <property type="entry name" value="Aspartate Aminotransferase, domain 1"/>
    <property type="match status" value="1"/>
</dbReference>
<dbReference type="Gene3D" id="3.40.640.10">
    <property type="entry name" value="Type I PLP-dependent aspartate aminotransferase-like (Major domain)"/>
    <property type="match status" value="1"/>
</dbReference>
<dbReference type="HAMAP" id="MF_00051">
    <property type="entry name" value="SHMT"/>
    <property type="match status" value="1"/>
</dbReference>
<dbReference type="InterPro" id="IPR015424">
    <property type="entry name" value="PyrdxlP-dep_Trfase"/>
</dbReference>
<dbReference type="InterPro" id="IPR015421">
    <property type="entry name" value="PyrdxlP-dep_Trfase_major"/>
</dbReference>
<dbReference type="InterPro" id="IPR015422">
    <property type="entry name" value="PyrdxlP-dep_Trfase_small"/>
</dbReference>
<dbReference type="InterPro" id="IPR001085">
    <property type="entry name" value="Ser_HO-MeTrfase"/>
</dbReference>
<dbReference type="InterPro" id="IPR049943">
    <property type="entry name" value="Ser_HO-MeTrfase-like"/>
</dbReference>
<dbReference type="InterPro" id="IPR019798">
    <property type="entry name" value="Ser_HO-MeTrfase_PLP_BS"/>
</dbReference>
<dbReference type="InterPro" id="IPR039429">
    <property type="entry name" value="SHMT-like_dom"/>
</dbReference>
<dbReference type="NCBIfam" id="NF000586">
    <property type="entry name" value="PRK00011.1"/>
    <property type="match status" value="1"/>
</dbReference>
<dbReference type="PANTHER" id="PTHR11680">
    <property type="entry name" value="SERINE HYDROXYMETHYLTRANSFERASE"/>
    <property type="match status" value="1"/>
</dbReference>
<dbReference type="PANTHER" id="PTHR11680:SF35">
    <property type="entry name" value="SERINE HYDROXYMETHYLTRANSFERASE 1"/>
    <property type="match status" value="1"/>
</dbReference>
<dbReference type="Pfam" id="PF00464">
    <property type="entry name" value="SHMT"/>
    <property type="match status" value="1"/>
</dbReference>
<dbReference type="PIRSF" id="PIRSF000412">
    <property type="entry name" value="SHMT"/>
    <property type="match status" value="1"/>
</dbReference>
<dbReference type="SUPFAM" id="SSF53383">
    <property type="entry name" value="PLP-dependent transferases"/>
    <property type="match status" value="1"/>
</dbReference>
<dbReference type="PROSITE" id="PS00096">
    <property type="entry name" value="SHMT"/>
    <property type="match status" value="1"/>
</dbReference>
<organism>
    <name type="scientific">Pyrobaculum aerophilum (strain ATCC 51768 / DSM 7523 / JCM 9630 / CIP 104966 / NBRC 100827 / IM2)</name>
    <dbReference type="NCBI Taxonomy" id="178306"/>
    <lineage>
        <taxon>Archaea</taxon>
        <taxon>Thermoproteota</taxon>
        <taxon>Thermoprotei</taxon>
        <taxon>Thermoproteales</taxon>
        <taxon>Thermoproteaceae</taxon>
        <taxon>Pyrobaculum</taxon>
    </lineage>
</organism>
<evidence type="ECO:0000255" key="1">
    <source>
        <dbReference type="HAMAP-Rule" id="MF_00051"/>
    </source>
</evidence>
<gene>
    <name evidence="1" type="primary">glyA</name>
    <name type="ordered locus">PAE0798</name>
</gene>
<proteinExistence type="inferred from homology"/>
<reference key="1">
    <citation type="journal article" date="2002" name="Proc. Natl. Acad. Sci. U.S.A.">
        <title>Genome sequence of the hyperthermophilic crenarchaeon Pyrobaculum aerophilum.</title>
        <authorList>
            <person name="Fitz-Gibbon S.T."/>
            <person name="Ladner H."/>
            <person name="Kim U.-J."/>
            <person name="Stetter K.O."/>
            <person name="Simon M.I."/>
            <person name="Miller J.H."/>
        </authorList>
    </citation>
    <scope>NUCLEOTIDE SEQUENCE [LARGE SCALE GENOMIC DNA]</scope>
    <source>
        <strain>ATCC 51768 / DSM 7523 / JCM 9630 / CIP 104966 / NBRC 100827 / IM2</strain>
    </source>
</reference>